<protein>
    <recommendedName>
        <fullName>Protein H2A.5</fullName>
    </recommendedName>
    <alternativeName>
        <fullName>wcH2A-2</fullName>
    </alternativeName>
</protein>
<keyword id="KW-0158">Chromosome</keyword>
<keyword id="KW-0238">DNA-binding</keyword>
<keyword id="KW-0544">Nucleosome core</keyword>
<keyword id="KW-0539">Nucleus</keyword>
<keyword id="KW-1185">Reference proteome</keyword>
<evidence type="ECO:0000250" key="1"/>
<evidence type="ECO:0000256" key="2">
    <source>
        <dbReference type="SAM" id="MobiDB-lite"/>
    </source>
</evidence>
<evidence type="ECO:0000269" key="3">
    <source>
    </source>
</evidence>
<evidence type="ECO:0000305" key="4"/>
<feature type="initiator methionine" description="Removed" evidence="1">
    <location>
        <position position="1"/>
    </location>
</feature>
<feature type="chain" id="PRO_0000244648" description="Protein H2A.5">
    <location>
        <begin position="2"/>
        <end position="145"/>
    </location>
</feature>
<feature type="region of interest" description="Disordered" evidence="2">
    <location>
        <begin position="118"/>
        <end position="145"/>
    </location>
</feature>
<feature type="short sequence motif" description="SPKK motif">
    <location>
        <begin position="135"/>
        <end position="138"/>
    </location>
</feature>
<feature type="compositionally biased region" description="Basic residues" evidence="2">
    <location>
        <begin position="135"/>
        <end position="145"/>
    </location>
</feature>
<proteinExistence type="evidence at transcript level"/>
<dbReference type="EMBL" id="D38087">
    <property type="protein sequence ID" value="BAA07276.1"/>
    <property type="molecule type" value="mRNA"/>
</dbReference>
<dbReference type="PIR" id="S53518">
    <property type="entry name" value="S53518"/>
</dbReference>
<dbReference type="SMR" id="Q43213"/>
<dbReference type="STRING" id="4565.Q43213"/>
<dbReference type="EnsemblPlants" id="TraesARI6D03G03626640.1">
    <property type="protein sequence ID" value="TraesARI6D03G03626640.1"/>
    <property type="gene ID" value="TraesARI6D03G03626640"/>
</dbReference>
<dbReference type="EnsemblPlants" id="TraesCAD_scaffold_044661_01G000200.1">
    <property type="protein sequence ID" value="TraesCAD_scaffold_044661_01G000200.1"/>
    <property type="gene ID" value="TraesCAD_scaffold_044661_01G000200"/>
</dbReference>
<dbReference type="EnsemblPlants" id="TraesCLE_scaffold_047276_01G000200.1">
    <property type="protein sequence ID" value="TraesCLE_scaffold_047276_01G000200.1"/>
    <property type="gene ID" value="TraesCLE_scaffold_047276_01G000200"/>
</dbReference>
<dbReference type="EnsemblPlants" id="TraesCS6D02G062800.1">
    <property type="protein sequence ID" value="TraesCS6D02G062800.1"/>
    <property type="gene ID" value="TraesCS6D02G062800"/>
</dbReference>
<dbReference type="EnsemblPlants" id="TraesCS6D03G0131100.1">
    <property type="protein sequence ID" value="TraesCS6D03G0131100.1.CDS"/>
    <property type="gene ID" value="TraesCS6D03G0131100"/>
</dbReference>
<dbReference type="EnsemblPlants" id="TraesJAGUn03G04490590.1">
    <property type="protein sequence ID" value="TraesJAGUn03G04490590.1"/>
    <property type="gene ID" value="TraesJAGUn03G04490590"/>
</dbReference>
<dbReference type="EnsemblPlants" id="TraesJUL6D03G03694090.1">
    <property type="protein sequence ID" value="TraesJUL6D03G03694090.1"/>
    <property type="gene ID" value="TraesJUL6D03G03694090"/>
</dbReference>
<dbReference type="EnsemblPlants" id="TraesKAR6D01G0028540.1">
    <property type="protein sequence ID" value="cds.TraesKAR6D01G0028540.1"/>
    <property type="gene ID" value="TraesKAR6D01G0028540"/>
</dbReference>
<dbReference type="EnsemblPlants" id="TraesLACUn03G04448150.1">
    <property type="protein sequence ID" value="TraesLACUn03G04448150.1"/>
    <property type="gene ID" value="TraesLACUn03G04448150"/>
</dbReference>
<dbReference type="EnsemblPlants" id="TraesLDMUn03G04512870.1">
    <property type="protein sequence ID" value="TraesLDMUn03G04512870.1"/>
    <property type="gene ID" value="TraesLDMUn03G04512870"/>
</dbReference>
<dbReference type="EnsemblPlants" id="TraesMAC6D03G03660080.1">
    <property type="protein sequence ID" value="TraesMAC6D03G03660080.1"/>
    <property type="gene ID" value="TraesMAC6D03G03660080"/>
</dbReference>
<dbReference type="EnsemblPlants" id="TraesPARA_EIv1.0_2209450.1">
    <property type="protein sequence ID" value="TraesPARA_EIv1.0_2209450.1.CDS"/>
    <property type="gene ID" value="TraesPARA_EIv1.0_2209450"/>
</dbReference>
<dbReference type="EnsemblPlants" id="TraesRN6D0100146100.1">
    <property type="protein sequence ID" value="TraesRN6D0100146100.1"/>
    <property type="gene ID" value="TraesRN6D0100146100"/>
</dbReference>
<dbReference type="EnsemblPlants" id="TraesROB_scaffold_043725_01G000200.1">
    <property type="protein sequence ID" value="TraesROB_scaffold_043725_01G000200.1"/>
    <property type="gene ID" value="TraesROB_scaffold_043725_01G000200"/>
</dbReference>
<dbReference type="EnsemblPlants" id="TraesSTA6D03G03654020.1">
    <property type="protein sequence ID" value="TraesSTA6D03G03654020.1"/>
    <property type="gene ID" value="TraesSTA6D03G03654020"/>
</dbReference>
<dbReference type="EnsemblPlants" id="TraesWEE_scaffold_043343_01G000200.1">
    <property type="protein sequence ID" value="TraesWEE_scaffold_043343_01G000200.1"/>
    <property type="gene ID" value="TraesWEE_scaffold_043343_01G000200"/>
</dbReference>
<dbReference type="Gramene" id="TraesARI6D03G03626640.1">
    <property type="protein sequence ID" value="TraesARI6D03G03626640.1"/>
    <property type="gene ID" value="TraesARI6D03G03626640"/>
</dbReference>
<dbReference type="Gramene" id="TraesCAD_scaffold_044661_01G000200.1">
    <property type="protein sequence ID" value="TraesCAD_scaffold_044661_01G000200.1"/>
    <property type="gene ID" value="TraesCAD_scaffold_044661_01G000200"/>
</dbReference>
<dbReference type="Gramene" id="TraesCLE_scaffold_047276_01G000200.1">
    <property type="protein sequence ID" value="TraesCLE_scaffold_047276_01G000200.1"/>
    <property type="gene ID" value="TraesCLE_scaffold_047276_01G000200"/>
</dbReference>
<dbReference type="Gramene" id="TraesCS6D02G062800.1">
    <property type="protein sequence ID" value="TraesCS6D02G062800.1"/>
    <property type="gene ID" value="TraesCS6D02G062800"/>
</dbReference>
<dbReference type="Gramene" id="TraesCS6D03G0131100.1">
    <property type="protein sequence ID" value="TraesCS6D03G0131100.1.CDS"/>
    <property type="gene ID" value="TraesCS6D03G0131100"/>
</dbReference>
<dbReference type="Gramene" id="TraesJAGUn03G04490590.1">
    <property type="protein sequence ID" value="TraesJAGUn03G04490590.1"/>
    <property type="gene ID" value="TraesJAGUn03G04490590"/>
</dbReference>
<dbReference type="Gramene" id="TraesJUL6D03G03694090.1">
    <property type="protein sequence ID" value="TraesJUL6D03G03694090.1"/>
    <property type="gene ID" value="TraesJUL6D03G03694090"/>
</dbReference>
<dbReference type="Gramene" id="TraesKAR6D01G0028540.1">
    <property type="protein sequence ID" value="cds.TraesKAR6D01G0028540.1"/>
    <property type="gene ID" value="TraesKAR6D01G0028540"/>
</dbReference>
<dbReference type="Gramene" id="TraesLACUn03G04448150.1">
    <property type="protein sequence ID" value="TraesLACUn03G04448150.1"/>
    <property type="gene ID" value="TraesLACUn03G04448150"/>
</dbReference>
<dbReference type="Gramene" id="TraesLDMUn03G04512870.1">
    <property type="protein sequence ID" value="TraesLDMUn03G04512870.1"/>
    <property type="gene ID" value="TraesLDMUn03G04512870"/>
</dbReference>
<dbReference type="Gramene" id="TraesMAC6D03G03660080.1">
    <property type="protein sequence ID" value="TraesMAC6D03G03660080.1"/>
    <property type="gene ID" value="TraesMAC6D03G03660080"/>
</dbReference>
<dbReference type="Gramene" id="TraesPARA_EIv1.0_2209450.1">
    <property type="protein sequence ID" value="TraesPARA_EIv1.0_2209450.1.CDS"/>
    <property type="gene ID" value="TraesPARA_EIv1.0_2209450"/>
</dbReference>
<dbReference type="Gramene" id="TraesRN6D0100146100.1">
    <property type="protein sequence ID" value="TraesRN6D0100146100.1"/>
    <property type="gene ID" value="TraesRN6D0100146100"/>
</dbReference>
<dbReference type="Gramene" id="TraesROB_scaffold_043725_01G000200.1">
    <property type="protein sequence ID" value="TraesROB_scaffold_043725_01G000200.1"/>
    <property type="gene ID" value="TraesROB_scaffold_043725_01G000200"/>
</dbReference>
<dbReference type="Gramene" id="TraesSTA6D03G03654020.1">
    <property type="protein sequence ID" value="TraesSTA6D03G03654020.1"/>
    <property type="gene ID" value="TraesSTA6D03G03654020"/>
</dbReference>
<dbReference type="Gramene" id="TraesWEE_scaffold_043343_01G000200.1">
    <property type="protein sequence ID" value="TraesWEE_scaffold_043343_01G000200.1"/>
    <property type="gene ID" value="TraesWEE_scaffold_043343_01G000200"/>
</dbReference>
<dbReference type="OMA" id="TSYSTRX"/>
<dbReference type="OrthoDB" id="10253031at2759"/>
<dbReference type="Proteomes" id="UP000019116">
    <property type="component" value="Chromosome 6D"/>
</dbReference>
<dbReference type="GO" id="GO:0000786">
    <property type="term" value="C:nucleosome"/>
    <property type="evidence" value="ECO:0000318"/>
    <property type="project" value="GO_Central"/>
</dbReference>
<dbReference type="GO" id="GO:0005634">
    <property type="term" value="C:nucleus"/>
    <property type="evidence" value="ECO:0000318"/>
    <property type="project" value="GO_Central"/>
</dbReference>
<dbReference type="GO" id="GO:0003677">
    <property type="term" value="F:DNA binding"/>
    <property type="evidence" value="ECO:0007669"/>
    <property type="project" value="UniProtKB-KW"/>
</dbReference>
<dbReference type="GO" id="GO:0046982">
    <property type="term" value="F:protein heterodimerization activity"/>
    <property type="evidence" value="ECO:0007669"/>
    <property type="project" value="InterPro"/>
</dbReference>
<dbReference type="GO" id="GO:0030527">
    <property type="term" value="F:structural constituent of chromatin"/>
    <property type="evidence" value="ECO:0000318"/>
    <property type="project" value="GO_Central"/>
</dbReference>
<dbReference type="GO" id="GO:0031507">
    <property type="term" value="P:heterochromatin formation"/>
    <property type="evidence" value="ECO:0000318"/>
    <property type="project" value="GO_Central"/>
</dbReference>
<dbReference type="CDD" id="cd00074">
    <property type="entry name" value="HFD_H2A"/>
    <property type="match status" value="1"/>
</dbReference>
<dbReference type="FunFam" id="1.10.20.10:FF:000026">
    <property type="entry name" value="Histone H2A"/>
    <property type="match status" value="1"/>
</dbReference>
<dbReference type="Gene3D" id="1.10.20.10">
    <property type="entry name" value="Histone, subunit A"/>
    <property type="match status" value="1"/>
</dbReference>
<dbReference type="InterPro" id="IPR009072">
    <property type="entry name" value="Histone-fold"/>
</dbReference>
<dbReference type="InterPro" id="IPR002119">
    <property type="entry name" value="Histone_H2A"/>
</dbReference>
<dbReference type="InterPro" id="IPR007125">
    <property type="entry name" value="Histone_H2A/H2B/H3"/>
</dbReference>
<dbReference type="InterPro" id="IPR032454">
    <property type="entry name" value="Histone_H2A_C"/>
</dbReference>
<dbReference type="InterPro" id="IPR032458">
    <property type="entry name" value="Histone_H2A_CS"/>
</dbReference>
<dbReference type="PANTHER" id="PTHR23430">
    <property type="entry name" value="HISTONE H2A"/>
    <property type="match status" value="1"/>
</dbReference>
<dbReference type="Pfam" id="PF00125">
    <property type="entry name" value="Histone"/>
    <property type="match status" value="1"/>
</dbReference>
<dbReference type="Pfam" id="PF16211">
    <property type="entry name" value="Histone_H2A_C"/>
    <property type="match status" value="1"/>
</dbReference>
<dbReference type="PRINTS" id="PR00620">
    <property type="entry name" value="HISTONEH2A"/>
</dbReference>
<dbReference type="SMART" id="SM00414">
    <property type="entry name" value="H2A"/>
    <property type="match status" value="1"/>
</dbReference>
<dbReference type="SUPFAM" id="SSF47113">
    <property type="entry name" value="Histone-fold"/>
    <property type="match status" value="1"/>
</dbReference>
<dbReference type="PROSITE" id="PS00046">
    <property type="entry name" value="HISTONE_H2A"/>
    <property type="match status" value="1"/>
</dbReference>
<sequence>MAGRKGGDRKKAVTRSVKAGLQFPVGRIGRYLKKGRYAQRVGSGAPVYLAAVLEYLAAEVLELAGNAAKDNKKTRIIPRHLLLAVRNDQELGRLLAGVTIAHGGVIPNINSVLLPKKSPAAAEKEAKSQKAAAKSPKKKTAATKE</sequence>
<reference key="1">
    <citation type="journal article" date="1995" name="Biochim. Biophys. Acta">
        <title>Differential expression of the two types of histone H2A genes in wheat.</title>
        <authorList>
            <person name="Huh G.H."/>
            <person name="Matsuura Y."/>
            <person name="Meshi T."/>
            <person name="Iwabuchi M."/>
        </authorList>
    </citation>
    <scope>NUCLEOTIDE SEQUENCE [MRNA]</scope>
    <scope>DEVELOPMENTAL STAGE</scope>
    <scope>TISSUE SPECIFICITY</scope>
</reference>
<gene>
    <name type="primary">H2A-2</name>
</gene>
<name>H2A5_WHEAT</name>
<comment type="function">
    <text>Core component of nucleosome. Nucleosomes wrap and compact DNA into chromatin, limiting DNA accessibility to the cellular machineries which require DNA as a template. Histones thereby play a central role in transcription regulation, DNA repair, DNA replication and chromosomal stability. DNA accessibility is regulated via a complex set of post-translational modifications of histones, also called histone code, and nucleosome remodeling.</text>
</comment>
<comment type="subunit">
    <text>The nucleosome is a histone octamer containing two molecules each of H2A, H2B, H3 and H4 assembled in one H3-H4 heterotetramer and two H2A-H2B heterodimers. The octamer wraps approximately 147 bp of DNA.</text>
</comment>
<comment type="subcellular location">
    <subcellularLocation>
        <location evidence="1">Nucleus</location>
    </subcellularLocation>
    <subcellularLocation>
        <location evidence="1">Chromosome</location>
    </subcellularLocation>
</comment>
<comment type="tissue specificity">
    <text evidence="3">Abundant in meristematic tissues.</text>
</comment>
<comment type="developmental stage">
    <text evidence="3">Induced during germination.</text>
</comment>
<comment type="domain">
    <text>Contains one SPKK motif which may interact with the minor groove of A/T-rich DNA sites. Phosphorylation of this motif may regulate DNA binding. This motif is reiterated in both termini of histone H1 and in the N-terminus of sea urchin histones H2B, but its presence in the C-terminus seems to be unique to plant H2A.</text>
</comment>
<comment type="similarity">
    <text evidence="4">Belongs to the histone H2A family.</text>
</comment>
<accession>Q43213</accession>
<organism>
    <name type="scientific">Triticum aestivum</name>
    <name type="common">Wheat</name>
    <dbReference type="NCBI Taxonomy" id="4565"/>
    <lineage>
        <taxon>Eukaryota</taxon>
        <taxon>Viridiplantae</taxon>
        <taxon>Streptophyta</taxon>
        <taxon>Embryophyta</taxon>
        <taxon>Tracheophyta</taxon>
        <taxon>Spermatophyta</taxon>
        <taxon>Magnoliopsida</taxon>
        <taxon>Liliopsida</taxon>
        <taxon>Poales</taxon>
        <taxon>Poaceae</taxon>
        <taxon>BOP clade</taxon>
        <taxon>Pooideae</taxon>
        <taxon>Triticodae</taxon>
        <taxon>Triticeae</taxon>
        <taxon>Triticinae</taxon>
        <taxon>Triticum</taxon>
    </lineage>
</organism>